<name>Y2379_ARCFU</name>
<gene>
    <name type="ordered locus">AF_2379</name>
</gene>
<protein>
    <recommendedName>
        <fullName>Uncharacterized protein AF_2379</fullName>
    </recommendedName>
</protein>
<reference key="1">
    <citation type="journal article" date="1997" name="Nature">
        <title>The complete genome sequence of the hyperthermophilic, sulphate-reducing archaeon Archaeoglobus fulgidus.</title>
        <authorList>
            <person name="Klenk H.-P."/>
            <person name="Clayton R.A."/>
            <person name="Tomb J.-F."/>
            <person name="White O."/>
            <person name="Nelson K.E."/>
            <person name="Ketchum K.A."/>
            <person name="Dodson R.J."/>
            <person name="Gwinn M.L."/>
            <person name="Hickey E.K."/>
            <person name="Peterson J.D."/>
            <person name="Richardson D.L."/>
            <person name="Kerlavage A.R."/>
            <person name="Graham D.E."/>
            <person name="Kyrpides N.C."/>
            <person name="Fleischmann R.D."/>
            <person name="Quackenbush J."/>
            <person name="Lee N.H."/>
            <person name="Sutton G.G."/>
            <person name="Gill S.R."/>
            <person name="Kirkness E.F."/>
            <person name="Dougherty B.A."/>
            <person name="McKenney K."/>
            <person name="Adams M.D."/>
            <person name="Loftus B.J."/>
            <person name="Peterson S.N."/>
            <person name="Reich C.I."/>
            <person name="McNeil L.K."/>
            <person name="Badger J.H."/>
            <person name="Glodek A."/>
            <person name="Zhou L."/>
            <person name="Overbeek R."/>
            <person name="Gocayne J.D."/>
            <person name="Weidman J.F."/>
            <person name="McDonald L.A."/>
            <person name="Utterback T.R."/>
            <person name="Cotton M.D."/>
            <person name="Spriggs T."/>
            <person name="Artiach P."/>
            <person name="Kaine B.P."/>
            <person name="Sykes S.M."/>
            <person name="Sadow P.W."/>
            <person name="D'Andrea K.P."/>
            <person name="Bowman C."/>
            <person name="Fujii C."/>
            <person name="Garland S.A."/>
            <person name="Mason T.M."/>
            <person name="Olsen G.J."/>
            <person name="Fraser C.M."/>
            <person name="Smith H.O."/>
            <person name="Woese C.R."/>
            <person name="Venter J.C."/>
        </authorList>
    </citation>
    <scope>NUCLEOTIDE SEQUENCE [LARGE SCALE GENOMIC DNA]</scope>
    <source>
        <strain>ATCC 49558 / DSM 4304 / JCM 9628 / NBRC 100126 / VC-16</strain>
    </source>
</reference>
<evidence type="ECO:0000255" key="1"/>
<proteinExistence type="predicted"/>
<sequence length="85" mass="10080">MEVVLHLAGHCIETSAKKRYEMLVQELLKEDDEEREKILAEELELLLDFLKKADFSELRRRGFDGSREMRVRVKKVGEEFVVEEI</sequence>
<organism>
    <name type="scientific">Archaeoglobus fulgidus (strain ATCC 49558 / DSM 4304 / JCM 9628 / NBRC 100126 / VC-16)</name>
    <dbReference type="NCBI Taxonomy" id="224325"/>
    <lineage>
        <taxon>Archaea</taxon>
        <taxon>Methanobacteriati</taxon>
        <taxon>Methanobacteriota</taxon>
        <taxon>Archaeoglobi</taxon>
        <taxon>Archaeoglobales</taxon>
        <taxon>Archaeoglobaceae</taxon>
        <taxon>Archaeoglobus</taxon>
    </lineage>
</organism>
<accession>O30291</accession>
<keyword id="KW-0175">Coiled coil</keyword>
<keyword id="KW-1185">Reference proteome</keyword>
<feature type="chain" id="PRO_0000128148" description="Uncharacterized protein AF_2379">
    <location>
        <begin position="1"/>
        <end position="85"/>
    </location>
</feature>
<feature type="coiled-coil region" evidence="1">
    <location>
        <begin position="17"/>
        <end position="53"/>
    </location>
</feature>
<dbReference type="EMBL" id="AE000782">
    <property type="protein sequence ID" value="AAB91299.1"/>
    <property type="molecule type" value="Genomic_DNA"/>
</dbReference>
<dbReference type="PIR" id="C69547">
    <property type="entry name" value="C69547"/>
</dbReference>
<dbReference type="RefSeq" id="WP_010879866.1">
    <property type="nucleotide sequence ID" value="NC_000917.1"/>
</dbReference>
<dbReference type="STRING" id="224325.AF_2379"/>
<dbReference type="PaxDb" id="224325-AF_2379"/>
<dbReference type="EnsemblBacteria" id="AAB91299">
    <property type="protein sequence ID" value="AAB91299"/>
    <property type="gene ID" value="AF_2379"/>
</dbReference>
<dbReference type="GeneID" id="1485609"/>
<dbReference type="KEGG" id="afu:AF_2379"/>
<dbReference type="eggNOG" id="arCOG15049">
    <property type="taxonomic scope" value="Archaea"/>
</dbReference>
<dbReference type="HOGENOM" id="CLU_2504777_0_0_2"/>
<dbReference type="Proteomes" id="UP000002199">
    <property type="component" value="Chromosome"/>
</dbReference>